<organism>
    <name type="scientific">Burkholderia vietnamiensis (strain G4 / LMG 22486)</name>
    <name type="common">Burkholderia cepacia (strain R1808)</name>
    <dbReference type="NCBI Taxonomy" id="269482"/>
    <lineage>
        <taxon>Bacteria</taxon>
        <taxon>Pseudomonadati</taxon>
        <taxon>Pseudomonadota</taxon>
        <taxon>Betaproteobacteria</taxon>
        <taxon>Burkholderiales</taxon>
        <taxon>Burkholderiaceae</taxon>
        <taxon>Burkholderia</taxon>
        <taxon>Burkholderia cepacia complex</taxon>
    </lineage>
</organism>
<proteinExistence type="inferred from homology"/>
<keyword id="KW-0963">Cytoplasm</keyword>
<keyword id="KW-0690">Ribosome biogenesis</keyword>
<name>RBFA_BURVG</name>
<dbReference type="EMBL" id="CP000614">
    <property type="protein sequence ID" value="ABO54475.1"/>
    <property type="molecule type" value="Genomic_DNA"/>
</dbReference>
<dbReference type="SMR" id="A4JDX2"/>
<dbReference type="KEGG" id="bvi:Bcep1808_1467"/>
<dbReference type="eggNOG" id="COG0858">
    <property type="taxonomic scope" value="Bacteria"/>
</dbReference>
<dbReference type="HOGENOM" id="CLU_089475_5_1_4"/>
<dbReference type="Proteomes" id="UP000002287">
    <property type="component" value="Chromosome 1"/>
</dbReference>
<dbReference type="GO" id="GO:0005829">
    <property type="term" value="C:cytosol"/>
    <property type="evidence" value="ECO:0007669"/>
    <property type="project" value="TreeGrafter"/>
</dbReference>
<dbReference type="GO" id="GO:0043024">
    <property type="term" value="F:ribosomal small subunit binding"/>
    <property type="evidence" value="ECO:0007669"/>
    <property type="project" value="TreeGrafter"/>
</dbReference>
<dbReference type="GO" id="GO:0030490">
    <property type="term" value="P:maturation of SSU-rRNA"/>
    <property type="evidence" value="ECO:0007669"/>
    <property type="project" value="UniProtKB-UniRule"/>
</dbReference>
<dbReference type="Gene3D" id="3.30.300.20">
    <property type="match status" value="1"/>
</dbReference>
<dbReference type="HAMAP" id="MF_00003">
    <property type="entry name" value="RbfA"/>
    <property type="match status" value="1"/>
</dbReference>
<dbReference type="InterPro" id="IPR015946">
    <property type="entry name" value="KH_dom-like_a/b"/>
</dbReference>
<dbReference type="InterPro" id="IPR000238">
    <property type="entry name" value="RbfA"/>
</dbReference>
<dbReference type="InterPro" id="IPR023799">
    <property type="entry name" value="RbfA_dom_sf"/>
</dbReference>
<dbReference type="NCBIfam" id="TIGR00082">
    <property type="entry name" value="rbfA"/>
    <property type="match status" value="1"/>
</dbReference>
<dbReference type="PANTHER" id="PTHR33515">
    <property type="entry name" value="RIBOSOME-BINDING FACTOR A, CHLOROPLASTIC-RELATED"/>
    <property type="match status" value="1"/>
</dbReference>
<dbReference type="PANTHER" id="PTHR33515:SF1">
    <property type="entry name" value="RIBOSOME-BINDING FACTOR A, CHLOROPLASTIC-RELATED"/>
    <property type="match status" value="1"/>
</dbReference>
<dbReference type="Pfam" id="PF02033">
    <property type="entry name" value="RBFA"/>
    <property type="match status" value="1"/>
</dbReference>
<dbReference type="SUPFAM" id="SSF89919">
    <property type="entry name" value="Ribosome-binding factor A, RbfA"/>
    <property type="match status" value="1"/>
</dbReference>
<comment type="function">
    <text evidence="1">One of several proteins that assist in the late maturation steps of the functional core of the 30S ribosomal subunit. Associates with free 30S ribosomal subunits (but not with 30S subunits that are part of 70S ribosomes or polysomes). Required for efficient processing of 16S rRNA. May interact with the 5'-terminal helix region of 16S rRNA.</text>
</comment>
<comment type="subunit">
    <text evidence="1">Monomer. Binds 30S ribosomal subunits, but not 50S ribosomal subunits or 70S ribosomes.</text>
</comment>
<comment type="subcellular location">
    <subcellularLocation>
        <location evidence="1">Cytoplasm</location>
    </subcellularLocation>
</comment>
<comment type="similarity">
    <text evidence="1">Belongs to the RbfA family.</text>
</comment>
<protein>
    <recommendedName>
        <fullName evidence="1">Ribosome-binding factor A</fullName>
    </recommendedName>
</protein>
<evidence type="ECO:0000255" key="1">
    <source>
        <dbReference type="HAMAP-Rule" id="MF_00003"/>
    </source>
</evidence>
<reference key="1">
    <citation type="submission" date="2007-03" db="EMBL/GenBank/DDBJ databases">
        <title>Complete sequence of chromosome 1 of Burkholderia vietnamiensis G4.</title>
        <authorList>
            <consortium name="US DOE Joint Genome Institute"/>
            <person name="Copeland A."/>
            <person name="Lucas S."/>
            <person name="Lapidus A."/>
            <person name="Barry K."/>
            <person name="Detter J.C."/>
            <person name="Glavina del Rio T."/>
            <person name="Hammon N."/>
            <person name="Israni S."/>
            <person name="Dalin E."/>
            <person name="Tice H."/>
            <person name="Pitluck S."/>
            <person name="Chain P."/>
            <person name="Malfatti S."/>
            <person name="Shin M."/>
            <person name="Vergez L."/>
            <person name="Schmutz J."/>
            <person name="Larimer F."/>
            <person name="Land M."/>
            <person name="Hauser L."/>
            <person name="Kyrpides N."/>
            <person name="Tiedje J."/>
            <person name="Richardson P."/>
        </authorList>
    </citation>
    <scope>NUCLEOTIDE SEQUENCE [LARGE SCALE GENOMIC DNA]</scope>
    <source>
        <strain>G4 / LMG 22486</strain>
    </source>
</reference>
<gene>
    <name evidence="1" type="primary">rbfA</name>
    <name type="ordered locus">Bcep1808_1467</name>
</gene>
<feature type="chain" id="PRO_1000000084" description="Ribosome-binding factor A">
    <location>
        <begin position="1"/>
        <end position="132"/>
    </location>
</feature>
<accession>A4JDX2</accession>
<sequence length="132" mass="15008">MSRKRTSPNRNVQIADQIQRDLSELIMREVKDPRIGIVTIQSVELTPDYAHAKVYFTALTGDPEKTQEALNHASGHLHNLLFKRLHIHTVPTLHFHYDQTIEKAVEMSRLIKEANSTRAKDDDEAGAPAQDD</sequence>